<gene>
    <name type="primary">alg44</name>
    <name type="ordered locus">PP_1286</name>
</gene>
<organism>
    <name type="scientific">Pseudomonas putida (strain ATCC 47054 / DSM 6125 / CFBP 8728 / NCIMB 11950 / KT2440)</name>
    <dbReference type="NCBI Taxonomy" id="160488"/>
    <lineage>
        <taxon>Bacteria</taxon>
        <taxon>Pseudomonadati</taxon>
        <taxon>Pseudomonadota</taxon>
        <taxon>Gammaproteobacteria</taxon>
        <taxon>Pseudomonadales</taxon>
        <taxon>Pseudomonadaceae</taxon>
        <taxon>Pseudomonas</taxon>
    </lineage>
</organism>
<feature type="chain" id="PRO_0000064553" description="Alginate biosynthesis protein Alg44">
    <location>
        <begin position="1"/>
        <end position="388"/>
    </location>
</feature>
<feature type="domain" description="PilZ">
    <location>
        <begin position="16"/>
        <end position="115"/>
    </location>
</feature>
<proteinExistence type="inferred from homology"/>
<keyword id="KW-0016">Alginate biosynthesis</keyword>
<keyword id="KW-0574">Periplasm</keyword>
<keyword id="KW-1185">Reference proteome</keyword>
<name>ALG44_PSEPK</name>
<dbReference type="EMBL" id="AE015451">
    <property type="protein sequence ID" value="AAN66910.1"/>
    <property type="molecule type" value="Genomic_DNA"/>
</dbReference>
<dbReference type="RefSeq" id="NP_743446.1">
    <property type="nucleotide sequence ID" value="NC_002947.4"/>
</dbReference>
<dbReference type="RefSeq" id="WP_010952415.1">
    <property type="nucleotide sequence ID" value="NZ_CP169744.1"/>
</dbReference>
<dbReference type="SMR" id="Q88NC6"/>
<dbReference type="STRING" id="160488.PP_1286"/>
<dbReference type="PaxDb" id="160488-PP_1286"/>
<dbReference type="KEGG" id="ppu:PP_1286"/>
<dbReference type="PATRIC" id="fig|160488.4.peg.1363"/>
<dbReference type="eggNOG" id="COG0845">
    <property type="taxonomic scope" value="Bacteria"/>
</dbReference>
<dbReference type="HOGENOM" id="CLU_058768_0_0_6"/>
<dbReference type="OrthoDB" id="5912905at2"/>
<dbReference type="PhylomeDB" id="Q88NC6"/>
<dbReference type="BioCyc" id="PPUT160488:G1G01-1373-MONOMER"/>
<dbReference type="UniPathway" id="UPA00286"/>
<dbReference type="Proteomes" id="UP000000556">
    <property type="component" value="Chromosome"/>
</dbReference>
<dbReference type="GO" id="GO:0042597">
    <property type="term" value="C:periplasmic space"/>
    <property type="evidence" value="ECO:0007669"/>
    <property type="project" value="UniProtKB-SubCell"/>
</dbReference>
<dbReference type="GO" id="GO:0035438">
    <property type="term" value="F:cyclic-di-GMP binding"/>
    <property type="evidence" value="ECO:0007669"/>
    <property type="project" value="InterPro"/>
</dbReference>
<dbReference type="GO" id="GO:0042121">
    <property type="term" value="P:alginic acid biosynthetic process"/>
    <property type="evidence" value="ECO:0007669"/>
    <property type="project" value="UniProtKB-UniPathway"/>
</dbReference>
<dbReference type="Gene3D" id="2.40.50.100">
    <property type="match status" value="1"/>
</dbReference>
<dbReference type="Gene3D" id="2.40.10.220">
    <property type="entry name" value="predicted glycosyltransferase like domains"/>
    <property type="match status" value="1"/>
</dbReference>
<dbReference type="InterPro" id="IPR050739">
    <property type="entry name" value="MFP"/>
</dbReference>
<dbReference type="InterPro" id="IPR009875">
    <property type="entry name" value="PilZ_domain"/>
</dbReference>
<dbReference type="PANTHER" id="PTHR30386">
    <property type="entry name" value="MEMBRANE FUSION SUBUNIT OF EMRAB-TOLC MULTIDRUG EFFLUX PUMP"/>
    <property type="match status" value="1"/>
</dbReference>
<dbReference type="PANTHER" id="PTHR30386:SF19">
    <property type="entry name" value="MULTIDRUG EXPORT PROTEIN EMRA-RELATED"/>
    <property type="match status" value="1"/>
</dbReference>
<dbReference type="Pfam" id="PF13437">
    <property type="entry name" value="HlyD_3"/>
    <property type="match status" value="1"/>
</dbReference>
<dbReference type="Pfam" id="PF07238">
    <property type="entry name" value="PilZ"/>
    <property type="match status" value="1"/>
</dbReference>
<dbReference type="SUPFAM" id="SSF141371">
    <property type="entry name" value="PilZ domain-like"/>
    <property type="match status" value="1"/>
</dbReference>
<reference key="1">
    <citation type="journal article" date="2002" name="Environ. Microbiol.">
        <title>Complete genome sequence and comparative analysis of the metabolically versatile Pseudomonas putida KT2440.</title>
        <authorList>
            <person name="Nelson K.E."/>
            <person name="Weinel C."/>
            <person name="Paulsen I.T."/>
            <person name="Dodson R.J."/>
            <person name="Hilbert H."/>
            <person name="Martins dos Santos V.A.P."/>
            <person name="Fouts D.E."/>
            <person name="Gill S.R."/>
            <person name="Pop M."/>
            <person name="Holmes M."/>
            <person name="Brinkac L.M."/>
            <person name="Beanan M.J."/>
            <person name="DeBoy R.T."/>
            <person name="Daugherty S.C."/>
            <person name="Kolonay J.F."/>
            <person name="Madupu R."/>
            <person name="Nelson W.C."/>
            <person name="White O."/>
            <person name="Peterson J.D."/>
            <person name="Khouri H.M."/>
            <person name="Hance I."/>
            <person name="Chris Lee P."/>
            <person name="Holtzapple E.K."/>
            <person name="Scanlan D."/>
            <person name="Tran K."/>
            <person name="Moazzez A."/>
            <person name="Utterback T.R."/>
            <person name="Rizzo M."/>
            <person name="Lee K."/>
            <person name="Kosack D."/>
            <person name="Moestl D."/>
            <person name="Wedler H."/>
            <person name="Lauber J."/>
            <person name="Stjepandic D."/>
            <person name="Hoheisel J."/>
            <person name="Straetz M."/>
            <person name="Heim S."/>
            <person name="Kiewitz C."/>
            <person name="Eisen J.A."/>
            <person name="Timmis K.N."/>
            <person name="Duesterhoeft A."/>
            <person name="Tuemmler B."/>
            <person name="Fraser C.M."/>
        </authorList>
    </citation>
    <scope>NUCLEOTIDE SEQUENCE [LARGE SCALE GENOMIC DNA]</scope>
    <source>
        <strain>ATCC 47054 / DSM 6125 / CFBP 8728 / NCIMB 11950 / KT2440</strain>
    </source>
</reference>
<protein>
    <recommendedName>
        <fullName>Alginate biosynthesis protein Alg44</fullName>
    </recommendedName>
</protein>
<evidence type="ECO:0000250" key="1"/>
<evidence type="ECO:0000305" key="2"/>
<sequence>MNTAVNVNVVHESEAQRQHARVRIPAKLRFLDAQRQVHEVKVEDLSAGGLSFHTKQPQSVGDVLRGRLQFVVDNLGLSIDIEFQVRSYNPDNGRIGAQFQNLEPRDIATLRHIITSHLSGELISIGDVLSTLQRDNFTKARKQKDGGSGLSAFGRFKAVTVTLGVFVVGVAAFGFVAKSLYGMYFVSHAEAGVVAVPTTNVTMPRDGTVSSLVESGGQIAKGAPLASFTTSMLDMLKGNLEDAQLEPAKIEELFGKQLSGTLTSPCDCVVARQLVDDGQYAAKGQPIFQLIPRTTTPMVEARFSYRQFDEVKPGTRVNFQVAGEDEVRTGQIVSSASLNSEDLSSDIRVQIKPDTGLPAELAGRPASVNSDRGPSLNWLIDKAVARGL</sequence>
<comment type="function">
    <text evidence="1">Required for alginate biosynthesis.</text>
</comment>
<comment type="pathway">
    <text>Glycan biosynthesis; alginate biosynthesis.</text>
</comment>
<comment type="subcellular location">
    <subcellularLocation>
        <location evidence="1">Periplasm</location>
    </subcellularLocation>
</comment>
<comment type="similarity">
    <text evidence="2">Belongs to the Alg44 family.</text>
</comment>
<accession>Q88NC6</accession>